<proteinExistence type="evidence at protein level"/>
<organism>
    <name type="scientific">Gloydius halys</name>
    <name type="common">Chinese water mocassin</name>
    <name type="synonym">Agkistrodon halys</name>
    <dbReference type="NCBI Taxonomy" id="8714"/>
    <lineage>
        <taxon>Eukaryota</taxon>
        <taxon>Metazoa</taxon>
        <taxon>Chordata</taxon>
        <taxon>Craniata</taxon>
        <taxon>Vertebrata</taxon>
        <taxon>Euteleostomi</taxon>
        <taxon>Lepidosauria</taxon>
        <taxon>Squamata</taxon>
        <taxon>Bifurcata</taxon>
        <taxon>Unidentata</taxon>
        <taxon>Episquamata</taxon>
        <taxon>Toxicofera</taxon>
        <taxon>Serpentes</taxon>
        <taxon>Colubroidea</taxon>
        <taxon>Viperidae</taxon>
        <taxon>Crotalinae</taxon>
        <taxon>Gloydius</taxon>
    </lineage>
</organism>
<evidence type="ECO:0000255" key="1">
    <source>
        <dbReference type="PROSITE-ProRule" id="PRU00274"/>
    </source>
</evidence>
<evidence type="ECO:0000269" key="2">
    <source>
    </source>
</evidence>
<evidence type="ECO:0000303" key="3">
    <source>
    </source>
</evidence>
<evidence type="ECO:0000305" key="4"/>
<evidence type="ECO:0000305" key="5">
    <source>
    </source>
</evidence>
<evidence type="ECO:0000312" key="6">
    <source>
        <dbReference type="PDB" id="4E7N"/>
    </source>
</evidence>
<evidence type="ECO:0007744" key="7">
    <source>
        <dbReference type="PDB" id="4E7N"/>
    </source>
</evidence>
<dbReference type="EC" id="3.4.21.-"/>
<dbReference type="EMBL" id="JQ965747">
    <property type="protein sequence ID" value="AFM29142.1"/>
    <property type="status" value="ALT_INIT"/>
    <property type="molecule type" value="mRNA"/>
</dbReference>
<dbReference type="PDB" id="4E7N">
    <property type="method" value="X-ray"/>
    <property type="resolution" value="1.75 A"/>
    <property type="chains" value="A=1-238"/>
</dbReference>
<dbReference type="PDBsum" id="4E7N"/>
<dbReference type="SMR" id="I4CHP3"/>
<dbReference type="MEROPS" id="S01.253"/>
<dbReference type="iPTMnet" id="I4CHP3"/>
<dbReference type="GO" id="GO:0005576">
    <property type="term" value="C:extracellular region"/>
    <property type="evidence" value="ECO:0007669"/>
    <property type="project" value="UniProtKB-SubCell"/>
</dbReference>
<dbReference type="GO" id="GO:0030141">
    <property type="term" value="C:secretory granule"/>
    <property type="evidence" value="ECO:0007669"/>
    <property type="project" value="TreeGrafter"/>
</dbReference>
<dbReference type="GO" id="GO:0004252">
    <property type="term" value="F:serine-type endopeptidase activity"/>
    <property type="evidence" value="ECO:0007669"/>
    <property type="project" value="InterPro"/>
</dbReference>
<dbReference type="GO" id="GO:0090729">
    <property type="term" value="F:toxin activity"/>
    <property type="evidence" value="ECO:0007669"/>
    <property type="project" value="UniProtKB-KW"/>
</dbReference>
<dbReference type="GO" id="GO:0006508">
    <property type="term" value="P:proteolysis"/>
    <property type="evidence" value="ECO:0007669"/>
    <property type="project" value="UniProtKB-KW"/>
</dbReference>
<dbReference type="CDD" id="cd00190">
    <property type="entry name" value="Tryp_SPc"/>
    <property type="match status" value="1"/>
</dbReference>
<dbReference type="FunFam" id="2.40.10.10:FF:000158">
    <property type="entry name" value="Thrombin-like enzyme saxthrombin"/>
    <property type="match status" value="1"/>
</dbReference>
<dbReference type="FunFam" id="2.40.10.10:FF:000153">
    <property type="entry name" value="Venom plasminogen activator TSV-PA"/>
    <property type="match status" value="1"/>
</dbReference>
<dbReference type="Gene3D" id="2.40.10.10">
    <property type="entry name" value="Trypsin-like serine proteases"/>
    <property type="match status" value="2"/>
</dbReference>
<dbReference type="InterPro" id="IPR009003">
    <property type="entry name" value="Peptidase_S1_PA"/>
</dbReference>
<dbReference type="InterPro" id="IPR043504">
    <property type="entry name" value="Peptidase_S1_PA_chymotrypsin"/>
</dbReference>
<dbReference type="InterPro" id="IPR001314">
    <property type="entry name" value="Peptidase_S1A"/>
</dbReference>
<dbReference type="InterPro" id="IPR001254">
    <property type="entry name" value="Trypsin_dom"/>
</dbReference>
<dbReference type="InterPro" id="IPR018114">
    <property type="entry name" value="TRYPSIN_HIS"/>
</dbReference>
<dbReference type="InterPro" id="IPR033116">
    <property type="entry name" value="TRYPSIN_SER"/>
</dbReference>
<dbReference type="PANTHER" id="PTHR24271:SF47">
    <property type="entry name" value="KALLIKREIN-1"/>
    <property type="match status" value="1"/>
</dbReference>
<dbReference type="PANTHER" id="PTHR24271">
    <property type="entry name" value="KALLIKREIN-RELATED"/>
    <property type="match status" value="1"/>
</dbReference>
<dbReference type="Pfam" id="PF00089">
    <property type="entry name" value="Trypsin"/>
    <property type="match status" value="1"/>
</dbReference>
<dbReference type="PRINTS" id="PR00722">
    <property type="entry name" value="CHYMOTRYPSIN"/>
</dbReference>
<dbReference type="SMART" id="SM00020">
    <property type="entry name" value="Tryp_SPc"/>
    <property type="match status" value="1"/>
</dbReference>
<dbReference type="SUPFAM" id="SSF50494">
    <property type="entry name" value="Trypsin-like serine proteases"/>
    <property type="match status" value="1"/>
</dbReference>
<dbReference type="PROSITE" id="PS50240">
    <property type="entry name" value="TRYPSIN_DOM"/>
    <property type="match status" value="1"/>
</dbReference>
<dbReference type="PROSITE" id="PS00134">
    <property type="entry name" value="TRYPSIN_HIS"/>
    <property type="match status" value="1"/>
</dbReference>
<dbReference type="PROSITE" id="PS00135">
    <property type="entry name" value="TRYPSIN_SER"/>
    <property type="match status" value="1"/>
</dbReference>
<reference key="1">
    <citation type="journal article" date="2013" name="Arch. Toxicol.">
        <title>Crystal structure and activating effect on RyRs of AhV_TL-I, a glycosylated thrombin-like enzyme from Agkistrodon halys snake venom.</title>
        <authorList>
            <person name="Zeng F."/>
            <person name="Shen B."/>
            <person name="Zhu Z."/>
            <person name="Zhang P."/>
            <person name="Ji Y."/>
            <person name="Niu L."/>
            <person name="Li X."/>
            <person name="Teng M."/>
        </authorList>
    </citation>
    <scope>NUCLEOTIDE SEQUENCE [MRNA]</scope>
    <scope>PROTEIN SEQUENCE OF 1-20</scope>
    <scope>X-RAY CRYSTALLOGRAPHY (1.75 ANGSTROMS) OF 1-238</scope>
    <scope>MASS SPECTROMETRY</scope>
    <scope>GLYCOSYLATION AT ASN-81</scope>
    <scope>DISULFIDE BOND</scope>
    <source>
        <tissue>Venom</tissue>
    </source>
</reference>
<comment type="function">
    <text evidence="2">Thrombin-like enzyme that shows fibrinogenolytic activity against both the Aalpha (FGA) and Bbeta (FGB) chains of bovine fibrinogen. This enzyme has poor esterolytic activity upon BAEE substrate. It induces mouse thoracic aortic ring contraction with EC(50)=147 nmol/L. It shows vasoconstrictor effects that are independent of the enzymatic activity, but related to the release of calcium ions form the calcium store, potentially through the activation of ryanodine receptors.</text>
</comment>
<comment type="activity regulation">
    <text evidence="2">Inhibited by PMSF, L-cysteine and partially by SBTI and leupeptin.</text>
</comment>
<comment type="subunit">
    <text evidence="2">Monomer.</text>
</comment>
<comment type="subcellular location">
    <subcellularLocation>
        <location evidence="2">Secreted</location>
    </subcellularLocation>
</comment>
<comment type="tissue specificity">
    <text evidence="5">Expressed by the venom gland.</text>
</comment>
<comment type="PTM">
    <text evidence="2">N-glycosylated at Asn-81 by a disaccharide composed of two N-acetylglucosamine (NAG). The presence of this N-glycan deforms the enzyme and Removing the carbohydrate moiety increases the esterase activity, but induces a complete loss of contractile response on mouse thoracic aorta.</text>
</comment>
<comment type="mass spectrometry"/>
<comment type="miscellaneous">
    <text evidence="2">Negative results: does not have effect on potassium channels and L-type calcium channels in vascular smooth muscle cells.</text>
</comment>
<comment type="similarity">
    <text evidence="1">Belongs to the peptidase S1 family. Snake venom subfamily.</text>
</comment>
<comment type="sequence caution" evidence="4">
    <conflict type="erroneous initiation">
        <sequence resource="EMBL-CDS" id="AFM29142"/>
    </conflict>
    <text>Extended N-terminus.</text>
</comment>
<sequence>IIGGDECNINEHRFLVALYTSRSRTLFCGGTLINQEWVLTAAHCDRKNFRIKLGMHSKKVPNEDEQTRVPKEKFFCLSSKNYTLWDKDIMLIRLDSPVKNSKHIAPFSLPSSPPSVGSVCRIMGWGRISPTEGTYPDVPHCVNINLLEYEMCRAPYPEFELPATSRTLCAGILEGGKDTCKGDSGGPLICNGQFQGIASWGDDPCAQPHKPAAYTKVFDHLDWIENIIAGNTDASCPP</sequence>
<accession>I4CHP3</accession>
<feature type="chain" id="PRO_0000445810" description="Thrombin-like enzyme AhV_TL-I">
    <location>
        <begin position="1"/>
        <end position="238"/>
    </location>
</feature>
<feature type="domain" description="Peptidase S1" evidence="1">
    <location>
        <begin position="1"/>
        <end position="229"/>
    </location>
</feature>
<feature type="active site" description="Charge relay system" evidence="1">
    <location>
        <position position="43"/>
    </location>
</feature>
<feature type="active site" description="Charge relay system" evidence="1">
    <location>
        <position position="88"/>
    </location>
</feature>
<feature type="active site" description="Charge relay system" evidence="1">
    <location>
        <position position="184"/>
    </location>
</feature>
<feature type="glycosylation site" description="N-linked (GlcNAc...) asparagine" evidence="2 6">
    <location>
        <position position="81"/>
    </location>
</feature>
<feature type="disulfide bond" evidence="2 7">
    <location>
        <begin position="7"/>
        <end position="141"/>
    </location>
</feature>
<feature type="disulfide bond" evidence="1 2 7">
    <location>
        <begin position="28"/>
        <end position="44"/>
    </location>
</feature>
<feature type="disulfide bond" evidence="2 7">
    <location>
        <begin position="76"/>
        <end position="236"/>
    </location>
</feature>
<feature type="disulfide bond" evidence="1 2 7">
    <location>
        <begin position="120"/>
        <end position="190"/>
    </location>
</feature>
<feature type="disulfide bond" evidence="1 2 7">
    <location>
        <begin position="152"/>
        <end position="169"/>
    </location>
</feature>
<feature type="disulfide bond" evidence="1 2 7">
    <location>
        <begin position="180"/>
        <end position="205"/>
    </location>
</feature>
<keyword id="KW-0002">3D-structure</keyword>
<keyword id="KW-0903">Direct protein sequencing</keyword>
<keyword id="KW-1015">Disulfide bond</keyword>
<keyword id="KW-1206">Fibrinogenolytic toxin</keyword>
<keyword id="KW-0325">Glycoprotein</keyword>
<keyword id="KW-1199">Hemostasis impairing toxin</keyword>
<keyword id="KW-0378">Hydrolase</keyword>
<keyword id="KW-0645">Protease</keyword>
<keyword id="KW-0964">Secreted</keyword>
<keyword id="KW-0720">Serine protease</keyword>
<keyword id="KW-0800">Toxin</keyword>
<protein>
    <recommendedName>
        <fullName evidence="3">Thrombin-like enzyme AhV_TL-I</fullName>
        <shortName evidence="3">SVTLE AhV_TL-I</shortName>
        <ecNumber>3.4.21.-</ecNumber>
    </recommendedName>
</protein>
<name>VSPI_GLOHA</name>